<proteinExistence type="inferred from homology"/>
<reference key="1">
    <citation type="journal article" date="2003" name="Genome Res.">
        <title>Tropheryma whipplei twist: a human pathogenic Actinobacteria with a reduced genome.</title>
        <authorList>
            <person name="Raoult D."/>
            <person name="Ogata H."/>
            <person name="Audic S."/>
            <person name="Robert C."/>
            <person name="Suhre K."/>
            <person name="Drancourt M."/>
            <person name="Claverie J.-M."/>
        </authorList>
    </citation>
    <scope>NUCLEOTIDE SEQUENCE [LARGE SCALE GENOMIC DNA]</scope>
    <source>
        <strain>Twist</strain>
    </source>
</reference>
<gene>
    <name evidence="1" type="primary">rpsT</name>
    <name type="ordered locus">TWT_276</name>
</gene>
<protein>
    <recommendedName>
        <fullName evidence="1">Small ribosomal subunit protein bS20</fullName>
    </recommendedName>
    <alternativeName>
        <fullName evidence="3">30S ribosomal protein S20</fullName>
    </alternativeName>
</protein>
<comment type="function">
    <text evidence="1">Binds directly to 16S ribosomal RNA.</text>
</comment>
<comment type="similarity">
    <text evidence="1">Belongs to the bacterial ribosomal protein bS20 family.</text>
</comment>
<dbReference type="EMBL" id="AE014184">
    <property type="protein sequence ID" value="AAO44373.1"/>
    <property type="molecule type" value="Genomic_DNA"/>
</dbReference>
<dbReference type="RefSeq" id="WP_011096442.1">
    <property type="nucleotide sequence ID" value="NC_004572.3"/>
</dbReference>
<dbReference type="SMR" id="Q83GJ5"/>
<dbReference type="STRING" id="203267.TWT_276"/>
<dbReference type="GeneID" id="67388274"/>
<dbReference type="KEGG" id="twh:TWT_276"/>
<dbReference type="eggNOG" id="COG0268">
    <property type="taxonomic scope" value="Bacteria"/>
</dbReference>
<dbReference type="HOGENOM" id="CLU_160655_0_1_11"/>
<dbReference type="OrthoDB" id="9807974at2"/>
<dbReference type="Proteomes" id="UP000002200">
    <property type="component" value="Chromosome"/>
</dbReference>
<dbReference type="GO" id="GO:0005829">
    <property type="term" value="C:cytosol"/>
    <property type="evidence" value="ECO:0007669"/>
    <property type="project" value="TreeGrafter"/>
</dbReference>
<dbReference type="GO" id="GO:0015935">
    <property type="term" value="C:small ribosomal subunit"/>
    <property type="evidence" value="ECO:0007669"/>
    <property type="project" value="TreeGrafter"/>
</dbReference>
<dbReference type="GO" id="GO:0070181">
    <property type="term" value="F:small ribosomal subunit rRNA binding"/>
    <property type="evidence" value="ECO:0007669"/>
    <property type="project" value="TreeGrafter"/>
</dbReference>
<dbReference type="GO" id="GO:0003735">
    <property type="term" value="F:structural constituent of ribosome"/>
    <property type="evidence" value="ECO:0007669"/>
    <property type="project" value="InterPro"/>
</dbReference>
<dbReference type="GO" id="GO:0006412">
    <property type="term" value="P:translation"/>
    <property type="evidence" value="ECO:0007669"/>
    <property type="project" value="UniProtKB-UniRule"/>
</dbReference>
<dbReference type="FunFam" id="1.20.58.110:FF:000001">
    <property type="entry name" value="30S ribosomal protein S20"/>
    <property type="match status" value="1"/>
</dbReference>
<dbReference type="Gene3D" id="1.20.58.110">
    <property type="entry name" value="Ribosomal protein S20"/>
    <property type="match status" value="1"/>
</dbReference>
<dbReference type="HAMAP" id="MF_00500">
    <property type="entry name" value="Ribosomal_bS20"/>
    <property type="match status" value="1"/>
</dbReference>
<dbReference type="InterPro" id="IPR002583">
    <property type="entry name" value="Ribosomal_bS20"/>
</dbReference>
<dbReference type="InterPro" id="IPR036510">
    <property type="entry name" value="Ribosomal_bS20_sf"/>
</dbReference>
<dbReference type="NCBIfam" id="TIGR00029">
    <property type="entry name" value="S20"/>
    <property type="match status" value="1"/>
</dbReference>
<dbReference type="PANTHER" id="PTHR33398">
    <property type="entry name" value="30S RIBOSOMAL PROTEIN S20"/>
    <property type="match status" value="1"/>
</dbReference>
<dbReference type="PANTHER" id="PTHR33398:SF1">
    <property type="entry name" value="SMALL RIBOSOMAL SUBUNIT PROTEIN BS20C"/>
    <property type="match status" value="1"/>
</dbReference>
<dbReference type="Pfam" id="PF01649">
    <property type="entry name" value="Ribosomal_S20p"/>
    <property type="match status" value="1"/>
</dbReference>
<dbReference type="SUPFAM" id="SSF46992">
    <property type="entry name" value="Ribosomal protein S20"/>
    <property type="match status" value="1"/>
</dbReference>
<accession>Q83GJ5</accession>
<sequence length="95" mass="10637">MANIKSQIKRNRTNENNRLRNKAVKSELKTLIRLVKRAARDNDLPRAEDALRRASLKLDRAVSKGVIHPNQAANRKSGIAKLVVATRLRNSTAGE</sequence>
<keyword id="KW-1185">Reference proteome</keyword>
<keyword id="KW-0687">Ribonucleoprotein</keyword>
<keyword id="KW-0689">Ribosomal protein</keyword>
<keyword id="KW-0694">RNA-binding</keyword>
<keyword id="KW-0699">rRNA-binding</keyword>
<name>RS20_TROWT</name>
<evidence type="ECO:0000255" key="1">
    <source>
        <dbReference type="HAMAP-Rule" id="MF_00500"/>
    </source>
</evidence>
<evidence type="ECO:0000256" key="2">
    <source>
        <dbReference type="SAM" id="MobiDB-lite"/>
    </source>
</evidence>
<evidence type="ECO:0000305" key="3"/>
<organism>
    <name type="scientific">Tropheryma whipplei (strain Twist)</name>
    <name type="common">Whipple's bacillus</name>
    <dbReference type="NCBI Taxonomy" id="203267"/>
    <lineage>
        <taxon>Bacteria</taxon>
        <taxon>Bacillati</taxon>
        <taxon>Actinomycetota</taxon>
        <taxon>Actinomycetes</taxon>
        <taxon>Micrococcales</taxon>
        <taxon>Tropherymataceae</taxon>
        <taxon>Tropheryma</taxon>
    </lineage>
</organism>
<feature type="chain" id="PRO_0000168054" description="Small ribosomal subunit protein bS20">
    <location>
        <begin position="1"/>
        <end position="95"/>
    </location>
</feature>
<feature type="region of interest" description="Disordered" evidence="2">
    <location>
        <begin position="1"/>
        <end position="22"/>
    </location>
</feature>
<feature type="compositionally biased region" description="Basic and acidic residues" evidence="2">
    <location>
        <begin position="12"/>
        <end position="22"/>
    </location>
</feature>